<reference key="1">
    <citation type="journal article" date="2003" name="Proc. Natl. Acad. Sci. U.S.A.">
        <title>The complete genome sequence of Chromobacterium violaceum reveals remarkable and exploitable bacterial adaptability.</title>
        <authorList>
            <person name="Vasconcelos A.T.R."/>
            <person name="de Almeida D.F."/>
            <person name="Hungria M."/>
            <person name="Guimaraes C.T."/>
            <person name="Antonio R.V."/>
            <person name="Almeida F.C."/>
            <person name="de Almeida L.G.P."/>
            <person name="de Almeida R."/>
            <person name="Alves-Gomes J.A."/>
            <person name="Andrade E.M."/>
            <person name="Araripe J."/>
            <person name="de Araujo M.F.F."/>
            <person name="Astolfi-Filho S."/>
            <person name="Azevedo V."/>
            <person name="Baptista A.J."/>
            <person name="Bataus L.A.M."/>
            <person name="Batista J.S."/>
            <person name="Belo A."/>
            <person name="van den Berg C."/>
            <person name="Bogo M."/>
            <person name="Bonatto S."/>
            <person name="Bordignon J."/>
            <person name="Brigido M.M."/>
            <person name="Brito C.A."/>
            <person name="Brocchi M."/>
            <person name="Burity H.A."/>
            <person name="Camargo A.A."/>
            <person name="Cardoso D.D.P."/>
            <person name="Carneiro N.P."/>
            <person name="Carraro D.M."/>
            <person name="Carvalho C.M.B."/>
            <person name="Cascardo J.C.M."/>
            <person name="Cavada B.S."/>
            <person name="Chueire L.M.O."/>
            <person name="Creczynski-Pasa T.B."/>
            <person name="Cunha-Junior N.C."/>
            <person name="Fagundes N."/>
            <person name="Falcao C.L."/>
            <person name="Fantinatti F."/>
            <person name="Farias I.P."/>
            <person name="Felipe M.S.S."/>
            <person name="Ferrari L.P."/>
            <person name="Ferro J.A."/>
            <person name="Ferro M.I.T."/>
            <person name="Franco G.R."/>
            <person name="Freitas N.S.A."/>
            <person name="Furlan L.R."/>
            <person name="Gazzinelli R.T."/>
            <person name="Gomes E.A."/>
            <person name="Goncalves P.R."/>
            <person name="Grangeiro T.B."/>
            <person name="Grattapaglia D."/>
            <person name="Grisard E.C."/>
            <person name="Hanna E.S."/>
            <person name="Jardim S.N."/>
            <person name="Laurino J."/>
            <person name="Leoi L.C.T."/>
            <person name="Lima L.F.A."/>
            <person name="Loureiro M.F."/>
            <person name="Lyra M.C.C.P."/>
            <person name="Madeira H.M.F."/>
            <person name="Manfio G.P."/>
            <person name="Maranhao A.Q."/>
            <person name="Martins W.S."/>
            <person name="di Mauro S.M.Z."/>
            <person name="de Medeiros S.R.B."/>
            <person name="Meissner R.V."/>
            <person name="Moreira M.A.M."/>
            <person name="Nascimento F.F."/>
            <person name="Nicolas M.F."/>
            <person name="Oliveira J.G."/>
            <person name="Oliveira S.C."/>
            <person name="Paixao R.F.C."/>
            <person name="Parente J.A."/>
            <person name="Pedrosa F.O."/>
            <person name="Pena S.D.J."/>
            <person name="Pereira J.O."/>
            <person name="Pereira M."/>
            <person name="Pinto L.S.R.C."/>
            <person name="Pinto L.S."/>
            <person name="Porto J.I.R."/>
            <person name="Potrich D.P."/>
            <person name="Ramalho-Neto C.E."/>
            <person name="Reis A.M.M."/>
            <person name="Rigo L.U."/>
            <person name="Rondinelli E."/>
            <person name="Santos E.B.P."/>
            <person name="Santos F.R."/>
            <person name="Schneider M.P.C."/>
            <person name="Seuanez H.N."/>
            <person name="Silva A.M.R."/>
            <person name="da Silva A.L.C."/>
            <person name="Silva D.W."/>
            <person name="Silva R."/>
            <person name="Simoes I.C."/>
            <person name="Simon D."/>
            <person name="Soares C.M.A."/>
            <person name="Soares R.B.A."/>
            <person name="Souza E.M."/>
            <person name="Souza K.R.L."/>
            <person name="Souza R.C."/>
            <person name="Steffens M.B.R."/>
            <person name="Steindel M."/>
            <person name="Teixeira S.R."/>
            <person name="Urmenyi T."/>
            <person name="Vettore A."/>
            <person name="Wassem R."/>
            <person name="Zaha A."/>
            <person name="Simpson A.J.G."/>
        </authorList>
    </citation>
    <scope>NUCLEOTIDE SEQUENCE [LARGE SCALE GENOMIC DNA]</scope>
    <source>
        <strain>ATCC 12472 / DSM 30191 / JCM 1249 / CCUG 213 / NBRC 12614 / NCIMB 9131 / NCTC 9757 / MK</strain>
    </source>
</reference>
<comment type="function">
    <text evidence="1">Acts as a chaperone.</text>
</comment>
<comment type="induction">
    <text evidence="1">By stress conditions e.g. heat shock.</text>
</comment>
<comment type="similarity">
    <text evidence="1">Belongs to the heat shock protein 70 family.</text>
</comment>
<keyword id="KW-0067">ATP-binding</keyword>
<keyword id="KW-0143">Chaperone</keyword>
<keyword id="KW-0547">Nucleotide-binding</keyword>
<keyword id="KW-0597">Phosphoprotein</keyword>
<keyword id="KW-1185">Reference proteome</keyword>
<keyword id="KW-0346">Stress response</keyword>
<sequence>MGKIIGIDLGTTNSCVAVVEGGNPKVIENAEGNRTTPSIIAYVEDGEILVGAPAKRQAVTNPKNTIYAAKRLIGRRFEDKEVQKDIDLMPFEILKAKNGDAWVKVRDQELAPPQISAEVLRKMKKAAEDYLGEEVTEAVITVPAYFNDSQRQATKDAGRIAGLEVKRIINEPTAAALAFGLAKQEGDRKIAVYDLGGGTFDVSIIEIADVDGEHQFEVLSTNGDTFLGGEDFDQRLIDYIVTEFKKEQGVDLKQDVMALQRLKEAAEKAKIELSSATQTEVNLPYITMDATGPKHLAMKITRAKFESLVDDLIARSIEPCRVALKDAGVSLSDITDVILVGGQTRMPKVQDAVKEFFGKEPRKDVNPDEAVAVGAAIQGSVLSGDRKDVLLLDVTPLSLGIETLGGVMTKLIQKNTTIPTKASQTFSTADDNQTAVTIHVLQGEREKAAANKSLGQFNLGDIPPAPRGIPQIEVEFNIDANGILHVSAKDKATGKQANITIQASSGLSEAEIERMVKDAEANAEEDKKLHELVTARNHAEGLIHSIKKSLGEHGDKIGADEKAKIESALKEAEEVVKGDDKEAIEAKAEELAKASQKLGEIMYAQAQAEAGAQGGAEQAEAGKKDEGNVVDAEFEEVKKDKA</sequence>
<evidence type="ECO:0000255" key="1">
    <source>
        <dbReference type="HAMAP-Rule" id="MF_00332"/>
    </source>
</evidence>
<evidence type="ECO:0000256" key="2">
    <source>
        <dbReference type="SAM" id="MobiDB-lite"/>
    </source>
</evidence>
<accession>Q7NXI3</accession>
<protein>
    <recommendedName>
        <fullName evidence="1">Chaperone protein DnaK</fullName>
    </recommendedName>
    <alternativeName>
        <fullName evidence="1">HSP70</fullName>
    </alternativeName>
    <alternativeName>
        <fullName evidence="1">Heat shock 70 kDa protein</fullName>
    </alternativeName>
    <alternativeName>
        <fullName evidence="1">Heat shock protein 70</fullName>
    </alternativeName>
</protein>
<organism>
    <name type="scientific">Chromobacterium violaceum (strain ATCC 12472 / DSM 30191 / JCM 1249 / CCUG 213 / NBRC 12614 / NCIMB 9131 / NCTC 9757 / MK)</name>
    <dbReference type="NCBI Taxonomy" id="243365"/>
    <lineage>
        <taxon>Bacteria</taxon>
        <taxon>Pseudomonadati</taxon>
        <taxon>Pseudomonadota</taxon>
        <taxon>Betaproteobacteria</taxon>
        <taxon>Neisseriales</taxon>
        <taxon>Chromobacteriaceae</taxon>
        <taxon>Chromobacterium</taxon>
    </lineage>
</organism>
<proteinExistence type="inferred from homology"/>
<dbReference type="EMBL" id="AE016825">
    <property type="protein sequence ID" value="AAQ59319.1"/>
    <property type="molecule type" value="Genomic_DNA"/>
</dbReference>
<dbReference type="RefSeq" id="WP_011135195.1">
    <property type="nucleotide sequence ID" value="NC_005085.1"/>
</dbReference>
<dbReference type="SMR" id="Q7NXI3"/>
<dbReference type="STRING" id="243365.CV_1643"/>
<dbReference type="GeneID" id="66367329"/>
<dbReference type="KEGG" id="cvi:CV_1643"/>
<dbReference type="eggNOG" id="COG0443">
    <property type="taxonomic scope" value="Bacteria"/>
</dbReference>
<dbReference type="HOGENOM" id="CLU_005965_2_1_4"/>
<dbReference type="OrthoDB" id="9766019at2"/>
<dbReference type="Proteomes" id="UP000001424">
    <property type="component" value="Chromosome"/>
</dbReference>
<dbReference type="GO" id="GO:0005524">
    <property type="term" value="F:ATP binding"/>
    <property type="evidence" value="ECO:0007669"/>
    <property type="project" value="UniProtKB-UniRule"/>
</dbReference>
<dbReference type="GO" id="GO:0140662">
    <property type="term" value="F:ATP-dependent protein folding chaperone"/>
    <property type="evidence" value="ECO:0007669"/>
    <property type="project" value="InterPro"/>
</dbReference>
<dbReference type="GO" id="GO:0051082">
    <property type="term" value="F:unfolded protein binding"/>
    <property type="evidence" value="ECO:0007669"/>
    <property type="project" value="InterPro"/>
</dbReference>
<dbReference type="CDD" id="cd10234">
    <property type="entry name" value="ASKHA_NBD_HSP70_DnaK-like"/>
    <property type="match status" value="1"/>
</dbReference>
<dbReference type="FunFam" id="2.60.34.10:FF:000014">
    <property type="entry name" value="Chaperone protein DnaK HSP70"/>
    <property type="match status" value="1"/>
</dbReference>
<dbReference type="FunFam" id="1.20.1270.10:FF:000001">
    <property type="entry name" value="Molecular chaperone DnaK"/>
    <property type="match status" value="1"/>
</dbReference>
<dbReference type="FunFam" id="3.30.420.40:FF:000004">
    <property type="entry name" value="Molecular chaperone DnaK"/>
    <property type="match status" value="1"/>
</dbReference>
<dbReference type="FunFam" id="3.90.640.10:FF:000003">
    <property type="entry name" value="Molecular chaperone DnaK"/>
    <property type="match status" value="1"/>
</dbReference>
<dbReference type="Gene3D" id="1.20.1270.10">
    <property type="match status" value="1"/>
</dbReference>
<dbReference type="Gene3D" id="3.30.420.40">
    <property type="match status" value="2"/>
</dbReference>
<dbReference type="Gene3D" id="3.90.640.10">
    <property type="entry name" value="Actin, Chain A, domain 4"/>
    <property type="match status" value="1"/>
</dbReference>
<dbReference type="Gene3D" id="2.60.34.10">
    <property type="entry name" value="Substrate Binding Domain Of DNAk, Chain A, domain 1"/>
    <property type="match status" value="1"/>
</dbReference>
<dbReference type="HAMAP" id="MF_00332">
    <property type="entry name" value="DnaK"/>
    <property type="match status" value="1"/>
</dbReference>
<dbReference type="InterPro" id="IPR043129">
    <property type="entry name" value="ATPase_NBD"/>
</dbReference>
<dbReference type="InterPro" id="IPR012725">
    <property type="entry name" value="Chaperone_DnaK"/>
</dbReference>
<dbReference type="InterPro" id="IPR018181">
    <property type="entry name" value="Heat_shock_70_CS"/>
</dbReference>
<dbReference type="InterPro" id="IPR029048">
    <property type="entry name" value="HSP70_C_sf"/>
</dbReference>
<dbReference type="InterPro" id="IPR029047">
    <property type="entry name" value="HSP70_peptide-bd_sf"/>
</dbReference>
<dbReference type="InterPro" id="IPR013126">
    <property type="entry name" value="Hsp_70_fam"/>
</dbReference>
<dbReference type="NCBIfam" id="NF001413">
    <property type="entry name" value="PRK00290.1"/>
    <property type="match status" value="1"/>
</dbReference>
<dbReference type="NCBIfam" id="NF003520">
    <property type="entry name" value="PRK05183.1"/>
    <property type="match status" value="1"/>
</dbReference>
<dbReference type="NCBIfam" id="TIGR02350">
    <property type="entry name" value="prok_dnaK"/>
    <property type="match status" value="1"/>
</dbReference>
<dbReference type="PANTHER" id="PTHR19375">
    <property type="entry name" value="HEAT SHOCK PROTEIN 70KDA"/>
    <property type="match status" value="1"/>
</dbReference>
<dbReference type="Pfam" id="PF00012">
    <property type="entry name" value="HSP70"/>
    <property type="match status" value="1"/>
</dbReference>
<dbReference type="PRINTS" id="PR00301">
    <property type="entry name" value="HEATSHOCK70"/>
</dbReference>
<dbReference type="SUPFAM" id="SSF53067">
    <property type="entry name" value="Actin-like ATPase domain"/>
    <property type="match status" value="2"/>
</dbReference>
<dbReference type="SUPFAM" id="SSF100934">
    <property type="entry name" value="Heat shock protein 70kD (HSP70), C-terminal subdomain"/>
    <property type="match status" value="1"/>
</dbReference>
<dbReference type="SUPFAM" id="SSF100920">
    <property type="entry name" value="Heat shock protein 70kD (HSP70), peptide-binding domain"/>
    <property type="match status" value="1"/>
</dbReference>
<dbReference type="PROSITE" id="PS00297">
    <property type="entry name" value="HSP70_1"/>
    <property type="match status" value="1"/>
</dbReference>
<dbReference type="PROSITE" id="PS00329">
    <property type="entry name" value="HSP70_2"/>
    <property type="match status" value="1"/>
</dbReference>
<dbReference type="PROSITE" id="PS01036">
    <property type="entry name" value="HSP70_3"/>
    <property type="match status" value="1"/>
</dbReference>
<name>DNAK_CHRVO</name>
<gene>
    <name evidence="1" type="primary">dnaK</name>
    <name type="ordered locus">CV_1643</name>
</gene>
<feature type="chain" id="PRO_0000078447" description="Chaperone protein DnaK">
    <location>
        <begin position="1"/>
        <end position="642"/>
    </location>
</feature>
<feature type="region of interest" description="Disordered" evidence="2">
    <location>
        <begin position="608"/>
        <end position="642"/>
    </location>
</feature>
<feature type="compositionally biased region" description="Low complexity" evidence="2">
    <location>
        <begin position="608"/>
        <end position="619"/>
    </location>
</feature>
<feature type="modified residue" description="Phosphothreonine; by autocatalysis" evidence="1">
    <location>
        <position position="199"/>
    </location>
</feature>